<gene>
    <name evidence="1" type="primary">hemE</name>
    <name type="ordered locus">EcolC_4028</name>
</gene>
<organism>
    <name type="scientific">Escherichia coli (strain ATCC 8739 / DSM 1576 / NBRC 3972 / NCIMB 8545 / WDCM 00012 / Crooks)</name>
    <dbReference type="NCBI Taxonomy" id="481805"/>
    <lineage>
        <taxon>Bacteria</taxon>
        <taxon>Pseudomonadati</taxon>
        <taxon>Pseudomonadota</taxon>
        <taxon>Gammaproteobacteria</taxon>
        <taxon>Enterobacterales</taxon>
        <taxon>Enterobacteriaceae</taxon>
        <taxon>Escherichia</taxon>
    </lineage>
</organism>
<dbReference type="EC" id="4.1.1.37" evidence="1"/>
<dbReference type="EMBL" id="CP000946">
    <property type="protein sequence ID" value="ACA79627.1"/>
    <property type="molecule type" value="Genomic_DNA"/>
</dbReference>
<dbReference type="RefSeq" id="WP_000137657.1">
    <property type="nucleotide sequence ID" value="NZ_MTFT01000025.1"/>
</dbReference>
<dbReference type="SMR" id="B1IUQ0"/>
<dbReference type="GeneID" id="93777897"/>
<dbReference type="KEGG" id="ecl:EcolC_4028"/>
<dbReference type="HOGENOM" id="CLU_040933_0_0_6"/>
<dbReference type="UniPathway" id="UPA00251">
    <property type="reaction ID" value="UER00321"/>
</dbReference>
<dbReference type="GO" id="GO:0005829">
    <property type="term" value="C:cytosol"/>
    <property type="evidence" value="ECO:0007669"/>
    <property type="project" value="TreeGrafter"/>
</dbReference>
<dbReference type="GO" id="GO:0004853">
    <property type="term" value="F:uroporphyrinogen decarboxylase activity"/>
    <property type="evidence" value="ECO:0007669"/>
    <property type="project" value="UniProtKB-UniRule"/>
</dbReference>
<dbReference type="GO" id="GO:0019353">
    <property type="term" value="P:protoporphyrinogen IX biosynthetic process from glutamate"/>
    <property type="evidence" value="ECO:0007669"/>
    <property type="project" value="TreeGrafter"/>
</dbReference>
<dbReference type="CDD" id="cd00717">
    <property type="entry name" value="URO-D"/>
    <property type="match status" value="1"/>
</dbReference>
<dbReference type="FunFam" id="3.20.20.210:FF:000001">
    <property type="entry name" value="Uroporphyrinogen decarboxylase"/>
    <property type="match status" value="1"/>
</dbReference>
<dbReference type="Gene3D" id="3.20.20.210">
    <property type="match status" value="1"/>
</dbReference>
<dbReference type="HAMAP" id="MF_00218">
    <property type="entry name" value="URO_D"/>
    <property type="match status" value="1"/>
</dbReference>
<dbReference type="InterPro" id="IPR038071">
    <property type="entry name" value="UROD/MetE-like_sf"/>
</dbReference>
<dbReference type="InterPro" id="IPR006361">
    <property type="entry name" value="Uroporphyrinogen_deCO2ase_HemE"/>
</dbReference>
<dbReference type="InterPro" id="IPR000257">
    <property type="entry name" value="Uroporphyrinogen_deCOase"/>
</dbReference>
<dbReference type="NCBIfam" id="TIGR01464">
    <property type="entry name" value="hemE"/>
    <property type="match status" value="1"/>
</dbReference>
<dbReference type="PANTHER" id="PTHR21091">
    <property type="entry name" value="METHYLTETRAHYDROFOLATE:HOMOCYSTEINE METHYLTRANSFERASE RELATED"/>
    <property type="match status" value="1"/>
</dbReference>
<dbReference type="PANTHER" id="PTHR21091:SF169">
    <property type="entry name" value="UROPORPHYRINOGEN DECARBOXYLASE"/>
    <property type="match status" value="1"/>
</dbReference>
<dbReference type="Pfam" id="PF01208">
    <property type="entry name" value="URO-D"/>
    <property type="match status" value="1"/>
</dbReference>
<dbReference type="SUPFAM" id="SSF51726">
    <property type="entry name" value="UROD/MetE-like"/>
    <property type="match status" value="1"/>
</dbReference>
<dbReference type="PROSITE" id="PS00906">
    <property type="entry name" value="UROD_1"/>
    <property type="match status" value="1"/>
</dbReference>
<dbReference type="PROSITE" id="PS00907">
    <property type="entry name" value="UROD_2"/>
    <property type="match status" value="1"/>
</dbReference>
<sequence>MTELKNDRYLRALLRQPVDVTPVWMMRQAGRYLPEYKATRAQAGDFMSLCKNAELACEVTLQPLRRYPLDAAILFSDILTVPDAMGLGLYFEAGEGPRFTSPVTCKADVDKLPIPDPEDELGYVMNAVRTIRRELKGEVPLIGFSGSPWTLATYMVEGGSSKAFTVIKKMMYADPQALHALLDKLAKSVTLYLNAQIKAGAQAVMIFDTWGGVLTGRDYQQFSLYYMHKIVDGLLRENDGRRVPVTLFTKGGGQWLEAMAETGCDALGLDWTTDIADARRRVGNKVALQGNMDPSMLYAPPARIEEEVATILAGFGHGEGHVFNLGHGIHQDVPPEHAGVFVEAVHRLSEQYHR</sequence>
<reference key="1">
    <citation type="submission" date="2008-02" db="EMBL/GenBank/DDBJ databases">
        <title>Complete sequence of Escherichia coli C str. ATCC 8739.</title>
        <authorList>
            <person name="Copeland A."/>
            <person name="Lucas S."/>
            <person name="Lapidus A."/>
            <person name="Glavina del Rio T."/>
            <person name="Dalin E."/>
            <person name="Tice H."/>
            <person name="Bruce D."/>
            <person name="Goodwin L."/>
            <person name="Pitluck S."/>
            <person name="Kiss H."/>
            <person name="Brettin T."/>
            <person name="Detter J.C."/>
            <person name="Han C."/>
            <person name="Kuske C.R."/>
            <person name="Schmutz J."/>
            <person name="Larimer F."/>
            <person name="Land M."/>
            <person name="Hauser L."/>
            <person name="Kyrpides N."/>
            <person name="Mikhailova N."/>
            <person name="Ingram L."/>
            <person name="Richardson P."/>
        </authorList>
    </citation>
    <scope>NUCLEOTIDE SEQUENCE [LARGE SCALE GENOMIC DNA]</scope>
    <source>
        <strain>ATCC 8739 / DSM 1576 / NBRC 3972 / NCIMB 8545 / WDCM 00012 / Crooks</strain>
    </source>
</reference>
<protein>
    <recommendedName>
        <fullName evidence="1">Uroporphyrinogen decarboxylase</fullName>
        <shortName evidence="1">UPD</shortName>
        <shortName evidence="1">URO-D</shortName>
        <ecNumber evidence="1">4.1.1.37</ecNumber>
    </recommendedName>
</protein>
<comment type="function">
    <text evidence="1">Catalyzes the decarboxylation of four acetate groups of uroporphyrinogen-III to yield coproporphyrinogen-III.</text>
</comment>
<comment type="catalytic activity">
    <reaction evidence="1">
        <text>uroporphyrinogen III + 4 H(+) = coproporphyrinogen III + 4 CO2</text>
        <dbReference type="Rhea" id="RHEA:19865"/>
        <dbReference type="ChEBI" id="CHEBI:15378"/>
        <dbReference type="ChEBI" id="CHEBI:16526"/>
        <dbReference type="ChEBI" id="CHEBI:57308"/>
        <dbReference type="ChEBI" id="CHEBI:57309"/>
        <dbReference type="EC" id="4.1.1.37"/>
    </reaction>
</comment>
<comment type="pathway">
    <text evidence="1">Porphyrin-containing compound metabolism; protoporphyrin-IX biosynthesis; coproporphyrinogen-III from 5-aminolevulinate: step 4/4.</text>
</comment>
<comment type="subunit">
    <text evidence="1">Homodimer.</text>
</comment>
<comment type="subcellular location">
    <subcellularLocation>
        <location evidence="1">Cytoplasm</location>
    </subcellularLocation>
</comment>
<comment type="similarity">
    <text evidence="1">Belongs to the uroporphyrinogen decarboxylase family.</text>
</comment>
<feature type="chain" id="PRO_1000078072" description="Uroporphyrinogen decarboxylase">
    <location>
        <begin position="1"/>
        <end position="354"/>
    </location>
</feature>
<feature type="binding site" evidence="1">
    <location>
        <begin position="27"/>
        <end position="31"/>
    </location>
    <ligand>
        <name>substrate</name>
    </ligand>
</feature>
<feature type="binding site" evidence="1">
    <location>
        <position position="77"/>
    </location>
    <ligand>
        <name>substrate</name>
    </ligand>
</feature>
<feature type="binding site" evidence="1">
    <location>
        <position position="154"/>
    </location>
    <ligand>
        <name>substrate</name>
    </ligand>
</feature>
<feature type="binding site" evidence="1">
    <location>
        <position position="209"/>
    </location>
    <ligand>
        <name>substrate</name>
    </ligand>
</feature>
<feature type="binding site" evidence="1">
    <location>
        <position position="327"/>
    </location>
    <ligand>
        <name>substrate</name>
    </ligand>
</feature>
<feature type="site" description="Transition state stabilizer" evidence="1">
    <location>
        <position position="77"/>
    </location>
</feature>
<proteinExistence type="inferred from homology"/>
<accession>B1IUQ0</accession>
<evidence type="ECO:0000255" key="1">
    <source>
        <dbReference type="HAMAP-Rule" id="MF_00218"/>
    </source>
</evidence>
<name>DCUP_ECOLC</name>
<keyword id="KW-0963">Cytoplasm</keyword>
<keyword id="KW-0210">Decarboxylase</keyword>
<keyword id="KW-0456">Lyase</keyword>
<keyword id="KW-0627">Porphyrin biosynthesis</keyword>